<organism evidence="13">
    <name type="scientific">Drosophila melanogaster</name>
    <name type="common">Fruit fly</name>
    <dbReference type="NCBI Taxonomy" id="7227"/>
    <lineage>
        <taxon>Eukaryota</taxon>
        <taxon>Metazoa</taxon>
        <taxon>Ecdysozoa</taxon>
        <taxon>Arthropoda</taxon>
        <taxon>Hexapoda</taxon>
        <taxon>Insecta</taxon>
        <taxon>Pterygota</taxon>
        <taxon>Neoptera</taxon>
        <taxon>Endopterygota</taxon>
        <taxon>Diptera</taxon>
        <taxon>Brachycera</taxon>
        <taxon>Muscomorpha</taxon>
        <taxon>Ephydroidea</taxon>
        <taxon>Drosophilidae</taxon>
        <taxon>Drosophila</taxon>
        <taxon>Sophophora</taxon>
    </lineage>
</organism>
<proteinExistence type="evidence at protein level"/>
<dbReference type="EMBL" id="AE014298">
    <property type="protein sequence ID" value="AAF46388.1"/>
    <property type="molecule type" value="Genomic_DNA"/>
</dbReference>
<dbReference type="EMBL" id="AY051460">
    <property type="protein sequence ID" value="AAK92884.1"/>
    <property type="molecule type" value="mRNA"/>
</dbReference>
<dbReference type="RefSeq" id="NP_572488.1">
    <property type="nucleotide sequence ID" value="NM_132260.3"/>
</dbReference>
<dbReference type="PDB" id="7SN8">
    <property type="method" value="EM"/>
    <property type="resolution" value="2.74 A"/>
    <property type="chains" value="D=1-1022"/>
</dbReference>
<dbReference type="PDBsum" id="7SN8"/>
<dbReference type="EMDB" id="EMD-25214"/>
<dbReference type="SMR" id="Q9W3E1"/>
<dbReference type="FunCoup" id="Q9W3E1">
    <property type="interactions" value="2524"/>
</dbReference>
<dbReference type="IntAct" id="Q9W3E1">
    <property type="interactions" value="9"/>
</dbReference>
<dbReference type="STRING" id="7227.FBpp0071178"/>
<dbReference type="PaxDb" id="7227-FBpp0071178"/>
<dbReference type="EnsemblMetazoa" id="FBtr0071234">
    <property type="protein sequence ID" value="FBpp0071178"/>
    <property type="gene ID" value="FBgn0026679"/>
</dbReference>
<dbReference type="GeneID" id="31793"/>
<dbReference type="KEGG" id="dme:Dmel_CG12113"/>
<dbReference type="UCSC" id="CG12113-RA">
    <property type="organism name" value="d. melanogaster"/>
</dbReference>
<dbReference type="AGR" id="FB:FBgn0026679"/>
<dbReference type="CTD" id="92105"/>
<dbReference type="FlyBase" id="FBgn0026679">
    <property type="gene designation" value="IntS4"/>
</dbReference>
<dbReference type="VEuPathDB" id="VectorBase:FBgn0026679"/>
<dbReference type="eggNOG" id="KOG2259">
    <property type="taxonomic scope" value="Eukaryota"/>
</dbReference>
<dbReference type="GeneTree" id="ENSGT00390000010128"/>
<dbReference type="HOGENOM" id="CLU_012910_1_0_1"/>
<dbReference type="InParanoid" id="Q9W3E1"/>
<dbReference type="OMA" id="GNRHPDY"/>
<dbReference type="OrthoDB" id="18190at2759"/>
<dbReference type="PhylomeDB" id="Q9W3E1"/>
<dbReference type="Reactome" id="R-DME-6807505">
    <property type="pathway name" value="RNA polymerase II transcribes snRNA genes"/>
</dbReference>
<dbReference type="SignaLink" id="Q9W3E1"/>
<dbReference type="BioGRID-ORCS" id="31793">
    <property type="hits" value="1 hit in 1 CRISPR screen"/>
</dbReference>
<dbReference type="GenomeRNAi" id="31793"/>
<dbReference type="PRO" id="PR:Q9W3E1"/>
<dbReference type="Proteomes" id="UP000000803">
    <property type="component" value="Chromosome X"/>
</dbReference>
<dbReference type="Bgee" id="FBgn0026679">
    <property type="expression patterns" value="Expressed in tendon cell (Drosophila) in body wall and 51 other cell types or tissues"/>
</dbReference>
<dbReference type="GO" id="GO:0160232">
    <property type="term" value="C:INTAC complex"/>
    <property type="evidence" value="ECO:0000314"/>
    <property type="project" value="UniProtKB"/>
</dbReference>
<dbReference type="GO" id="GO:0032039">
    <property type="term" value="C:integrator complex"/>
    <property type="evidence" value="ECO:0000314"/>
    <property type="project" value="UniProtKB"/>
</dbReference>
<dbReference type="GO" id="GO:0005634">
    <property type="term" value="C:nucleus"/>
    <property type="evidence" value="ECO:0000314"/>
    <property type="project" value="FlyBase"/>
</dbReference>
<dbReference type="GO" id="GO:0000822">
    <property type="term" value="F:inositol hexakisphosphate binding"/>
    <property type="evidence" value="ECO:0000314"/>
    <property type="project" value="UniProtKB"/>
</dbReference>
<dbReference type="GO" id="GO:0160240">
    <property type="term" value="P:RNA polymerase II transcription initiation surveillance"/>
    <property type="evidence" value="ECO:0000314"/>
    <property type="project" value="UniProtKB"/>
</dbReference>
<dbReference type="GO" id="GO:0034472">
    <property type="term" value="P:snRNA 3'-end processing"/>
    <property type="evidence" value="ECO:0000314"/>
    <property type="project" value="FlyBase"/>
</dbReference>
<dbReference type="GO" id="GO:0016180">
    <property type="term" value="P:snRNA processing"/>
    <property type="evidence" value="ECO:0000315"/>
    <property type="project" value="FlyBase"/>
</dbReference>
<dbReference type="FunFam" id="1.25.10.10:FF:000728">
    <property type="entry name" value="Blast:Integrator complex subunit 4"/>
    <property type="match status" value="1"/>
</dbReference>
<dbReference type="FunFam" id="1.25.10.10:FF:000961">
    <property type="entry name" value="integrator complex subunit 4"/>
    <property type="match status" value="1"/>
</dbReference>
<dbReference type="Gene3D" id="1.25.10.10">
    <property type="entry name" value="Leucine-rich Repeat Variant"/>
    <property type="match status" value="2"/>
</dbReference>
<dbReference type="InterPro" id="IPR011989">
    <property type="entry name" value="ARM-like"/>
</dbReference>
<dbReference type="InterPro" id="IPR016024">
    <property type="entry name" value="ARM-type_fold"/>
</dbReference>
<dbReference type="InterPro" id="IPR056235">
    <property type="entry name" value="INTS4_8HBD"/>
</dbReference>
<dbReference type="PANTHER" id="PTHR20938">
    <property type="entry name" value="INTEGRATOR COMPLEX SUBUNIT 4"/>
    <property type="match status" value="1"/>
</dbReference>
<dbReference type="PANTHER" id="PTHR20938:SF0">
    <property type="entry name" value="INTEGRATOR COMPLEX SUBUNIT 4"/>
    <property type="match status" value="1"/>
</dbReference>
<dbReference type="Pfam" id="PF24493">
    <property type="entry name" value="INTS4_8HBD"/>
    <property type="match status" value="1"/>
</dbReference>
<dbReference type="Pfam" id="PF25458">
    <property type="entry name" value="INTS4_C"/>
    <property type="match status" value="1"/>
</dbReference>
<dbReference type="SUPFAM" id="SSF48371">
    <property type="entry name" value="ARM repeat"/>
    <property type="match status" value="1"/>
</dbReference>
<accession>Q9W3E1</accession>
<reference evidence="13" key="1">
    <citation type="journal article" date="2000" name="Science">
        <title>The genome sequence of Drosophila melanogaster.</title>
        <authorList>
            <person name="Adams M.D."/>
            <person name="Celniker S.E."/>
            <person name="Holt R.A."/>
            <person name="Evans C.A."/>
            <person name="Gocayne J.D."/>
            <person name="Amanatides P.G."/>
            <person name="Scherer S.E."/>
            <person name="Li P.W."/>
            <person name="Hoskins R.A."/>
            <person name="Galle R.F."/>
            <person name="George R.A."/>
            <person name="Lewis S.E."/>
            <person name="Richards S."/>
            <person name="Ashburner M."/>
            <person name="Henderson S.N."/>
            <person name="Sutton G.G."/>
            <person name="Wortman J.R."/>
            <person name="Yandell M.D."/>
            <person name="Zhang Q."/>
            <person name="Chen L.X."/>
            <person name="Brandon R.C."/>
            <person name="Rogers Y.-H.C."/>
            <person name="Blazej R.G."/>
            <person name="Champe M."/>
            <person name="Pfeiffer B.D."/>
            <person name="Wan K.H."/>
            <person name="Doyle C."/>
            <person name="Baxter E.G."/>
            <person name="Helt G."/>
            <person name="Nelson C.R."/>
            <person name="Miklos G.L.G."/>
            <person name="Abril J.F."/>
            <person name="Agbayani A."/>
            <person name="An H.-J."/>
            <person name="Andrews-Pfannkoch C."/>
            <person name="Baldwin D."/>
            <person name="Ballew R.M."/>
            <person name="Basu A."/>
            <person name="Baxendale J."/>
            <person name="Bayraktaroglu L."/>
            <person name="Beasley E.M."/>
            <person name="Beeson K.Y."/>
            <person name="Benos P.V."/>
            <person name="Berman B.P."/>
            <person name="Bhandari D."/>
            <person name="Bolshakov S."/>
            <person name="Borkova D."/>
            <person name="Botchan M.R."/>
            <person name="Bouck J."/>
            <person name="Brokstein P."/>
            <person name="Brottier P."/>
            <person name="Burtis K.C."/>
            <person name="Busam D.A."/>
            <person name="Butler H."/>
            <person name="Cadieu E."/>
            <person name="Center A."/>
            <person name="Chandra I."/>
            <person name="Cherry J.M."/>
            <person name="Cawley S."/>
            <person name="Dahlke C."/>
            <person name="Davenport L.B."/>
            <person name="Davies P."/>
            <person name="de Pablos B."/>
            <person name="Delcher A."/>
            <person name="Deng Z."/>
            <person name="Mays A.D."/>
            <person name="Dew I."/>
            <person name="Dietz S.M."/>
            <person name="Dodson K."/>
            <person name="Doup L.E."/>
            <person name="Downes M."/>
            <person name="Dugan-Rocha S."/>
            <person name="Dunkov B.C."/>
            <person name="Dunn P."/>
            <person name="Durbin K.J."/>
            <person name="Evangelista C.C."/>
            <person name="Ferraz C."/>
            <person name="Ferriera S."/>
            <person name="Fleischmann W."/>
            <person name="Fosler C."/>
            <person name="Gabrielian A.E."/>
            <person name="Garg N.S."/>
            <person name="Gelbart W.M."/>
            <person name="Glasser K."/>
            <person name="Glodek A."/>
            <person name="Gong F."/>
            <person name="Gorrell J.H."/>
            <person name="Gu Z."/>
            <person name="Guan P."/>
            <person name="Harris M."/>
            <person name="Harris N.L."/>
            <person name="Harvey D.A."/>
            <person name="Heiman T.J."/>
            <person name="Hernandez J.R."/>
            <person name="Houck J."/>
            <person name="Hostin D."/>
            <person name="Houston K.A."/>
            <person name="Howland T.J."/>
            <person name="Wei M.-H."/>
            <person name="Ibegwam C."/>
            <person name="Jalali M."/>
            <person name="Kalush F."/>
            <person name="Karpen G.H."/>
            <person name="Ke Z."/>
            <person name="Kennison J.A."/>
            <person name="Ketchum K.A."/>
            <person name="Kimmel B.E."/>
            <person name="Kodira C.D."/>
            <person name="Kraft C.L."/>
            <person name="Kravitz S."/>
            <person name="Kulp D."/>
            <person name="Lai Z."/>
            <person name="Lasko P."/>
            <person name="Lei Y."/>
            <person name="Levitsky A.A."/>
            <person name="Li J.H."/>
            <person name="Li Z."/>
            <person name="Liang Y."/>
            <person name="Lin X."/>
            <person name="Liu X."/>
            <person name="Mattei B."/>
            <person name="McIntosh T.C."/>
            <person name="McLeod M.P."/>
            <person name="McPherson D."/>
            <person name="Merkulov G."/>
            <person name="Milshina N.V."/>
            <person name="Mobarry C."/>
            <person name="Morris J."/>
            <person name="Moshrefi A."/>
            <person name="Mount S.M."/>
            <person name="Moy M."/>
            <person name="Murphy B."/>
            <person name="Murphy L."/>
            <person name="Muzny D.M."/>
            <person name="Nelson D.L."/>
            <person name="Nelson D.R."/>
            <person name="Nelson K.A."/>
            <person name="Nixon K."/>
            <person name="Nusskern D.R."/>
            <person name="Pacleb J.M."/>
            <person name="Palazzolo M."/>
            <person name="Pittman G.S."/>
            <person name="Pan S."/>
            <person name="Pollard J."/>
            <person name="Puri V."/>
            <person name="Reese M.G."/>
            <person name="Reinert K."/>
            <person name="Remington K."/>
            <person name="Saunders R.D.C."/>
            <person name="Scheeler F."/>
            <person name="Shen H."/>
            <person name="Shue B.C."/>
            <person name="Siden-Kiamos I."/>
            <person name="Simpson M."/>
            <person name="Skupski M.P."/>
            <person name="Smith T.J."/>
            <person name="Spier E."/>
            <person name="Spradling A.C."/>
            <person name="Stapleton M."/>
            <person name="Strong R."/>
            <person name="Sun E."/>
            <person name="Svirskas R."/>
            <person name="Tector C."/>
            <person name="Turner R."/>
            <person name="Venter E."/>
            <person name="Wang A.H."/>
            <person name="Wang X."/>
            <person name="Wang Z.-Y."/>
            <person name="Wassarman D.A."/>
            <person name="Weinstock G.M."/>
            <person name="Weissenbach J."/>
            <person name="Williams S.M."/>
            <person name="Woodage T."/>
            <person name="Worley K.C."/>
            <person name="Wu D."/>
            <person name="Yang S."/>
            <person name="Yao Q.A."/>
            <person name="Ye J."/>
            <person name="Yeh R.-F."/>
            <person name="Zaveri J.S."/>
            <person name="Zhan M."/>
            <person name="Zhang G."/>
            <person name="Zhao Q."/>
            <person name="Zheng L."/>
            <person name="Zheng X.H."/>
            <person name="Zhong F.N."/>
            <person name="Zhong W."/>
            <person name="Zhou X."/>
            <person name="Zhu S.C."/>
            <person name="Zhu X."/>
            <person name="Smith H.O."/>
            <person name="Gibbs R.A."/>
            <person name="Myers E.W."/>
            <person name="Rubin G.M."/>
            <person name="Venter J.C."/>
        </authorList>
    </citation>
    <scope>NUCLEOTIDE SEQUENCE [LARGE SCALE GENOMIC DNA]</scope>
    <source>
        <strain evidence="13">Berkeley</strain>
    </source>
</reference>
<reference evidence="13" key="2">
    <citation type="journal article" date="2002" name="Genome Biol.">
        <title>Annotation of the Drosophila melanogaster euchromatic genome: a systematic review.</title>
        <authorList>
            <person name="Misra S."/>
            <person name="Crosby M.A."/>
            <person name="Mungall C.J."/>
            <person name="Matthews B.B."/>
            <person name="Campbell K.S."/>
            <person name="Hradecky P."/>
            <person name="Huang Y."/>
            <person name="Kaminker J.S."/>
            <person name="Millburn G.H."/>
            <person name="Prochnik S.E."/>
            <person name="Smith C.D."/>
            <person name="Tupy J.L."/>
            <person name="Whitfield E.J."/>
            <person name="Bayraktaroglu L."/>
            <person name="Berman B.P."/>
            <person name="Bettencourt B.R."/>
            <person name="Celniker S.E."/>
            <person name="de Grey A.D.N.J."/>
            <person name="Drysdale R.A."/>
            <person name="Harris N.L."/>
            <person name="Richter J."/>
            <person name="Russo S."/>
            <person name="Schroeder A.J."/>
            <person name="Shu S.Q."/>
            <person name="Stapleton M."/>
            <person name="Yamada C."/>
            <person name="Ashburner M."/>
            <person name="Gelbart W.M."/>
            <person name="Rubin G.M."/>
            <person name="Lewis S.E."/>
        </authorList>
    </citation>
    <scope>GENOME REANNOTATION</scope>
    <source>
        <strain evidence="13">Berkeley</strain>
    </source>
</reference>
<reference evidence="11" key="3">
    <citation type="journal article" date="2011" name="Mol. Cell. Biol.">
        <title>A subset of Drosophila integrator proteins is essential for efficient U7 snRNA and spliceosomal snRNA 3'-end formation.</title>
        <authorList>
            <person name="Ezzeddine N."/>
            <person name="Chen J."/>
            <person name="Waltenspiel B."/>
            <person name="Burch B."/>
            <person name="Albrecht T."/>
            <person name="Zhuo M."/>
            <person name="Warren W.D."/>
            <person name="Marzluff W.F."/>
            <person name="Wagner E.J."/>
        </authorList>
    </citation>
    <scope>FUNCTION</scope>
</reference>
<reference evidence="11" key="4">
    <citation type="journal article" date="2012" name="RNA">
        <title>An RNAi screen identifies additional members of the Drosophila Integrator complex and a requirement for cyclin C/Cdk8 in snRNA 3'-end formation.</title>
        <authorList>
            <person name="Chen J."/>
            <person name="Ezzeddine N."/>
            <person name="Waltenspiel B."/>
            <person name="Albrecht T.R."/>
            <person name="Warren W.D."/>
            <person name="Marzluff W.F."/>
            <person name="Wagner E.J."/>
        </authorList>
    </citation>
    <scope>FUNCTION</scope>
    <scope>SUBUNIT</scope>
</reference>
<reference key="5">
    <citation type="journal article" date="2019" name="Genes Dev.">
        <title>The Integrator complex cleaves nascent mRNAs to attenuate transcription.</title>
        <authorList>
            <person name="Tatomer D.C."/>
            <person name="Elrod N.D."/>
            <person name="Liang D."/>
            <person name="Xiao M.S."/>
            <person name="Jiang J.Z."/>
            <person name="Jonathan M."/>
            <person name="Huang K.L."/>
            <person name="Wagner E.J."/>
            <person name="Cherry S."/>
            <person name="Wilusz J.E."/>
        </authorList>
    </citation>
    <scope>IDENTIFICATION IN THE INTEGRATOR COMPLEX</scope>
</reference>
<reference key="6">
    <citation type="journal article" date="2020" name="Mol. Cell">
        <title>Integrator recruits protein phosphatase 2A to prevent pause release and facilitate transcription termination.</title>
        <authorList>
            <person name="Huang K.L."/>
            <person name="Jee D."/>
            <person name="Stein C.B."/>
            <person name="Elrod N.D."/>
            <person name="Henriques T."/>
            <person name="Mascibroda L.G."/>
            <person name="Baillat D."/>
            <person name="Russell W.K."/>
            <person name="Adelman K."/>
            <person name="Wagner E.J."/>
        </authorList>
    </citation>
    <scope>FUNCTION</scope>
    <scope>IDENTIFICATION IN THE INTAC COMPLEX</scope>
</reference>
<reference key="7">
    <citation type="journal article" date="2023" name="Mol. Cell">
        <title>IntS6 and the Integrator phosphatase module tune the efficiency of select premature transcription termination events.</title>
        <authorList>
            <person name="Fujiwara R."/>
            <person name="Zhai S.N."/>
            <person name="Liang D."/>
            <person name="Shah A.P."/>
            <person name="Tracey M."/>
            <person name="Ma X.K."/>
            <person name="Fields C.J."/>
            <person name="Mendoza-Figueroa M.S."/>
            <person name="Meline M.C."/>
            <person name="Tatomer D.C."/>
            <person name="Yang L."/>
            <person name="Wilusz J.E."/>
        </authorList>
    </citation>
    <scope>IDENTIFICATION IN THE INTAC COMPLEX</scope>
</reference>
<reference key="8">
    <citation type="journal article" date="2024" name="Mol. Cell">
        <title>Cytoplasmic binding partners of the Integrator endonuclease INTS11 and its paralog CPSF73 are required for their nuclear function.</title>
        <authorList>
            <person name="Lin M.H."/>
            <person name="Jensen M.K."/>
            <person name="Elrod N.D."/>
            <person name="Chu H.F."/>
            <person name="Haseley M."/>
            <person name="Beam A.C."/>
            <person name="Huang K.L."/>
            <person name="Chiang W."/>
            <person name="Russell W.K."/>
            <person name="Williams K."/>
            <person name="Proschel C."/>
            <person name="Wagner E.J."/>
            <person name="Tong L."/>
        </authorList>
    </citation>
    <scope>IDENTIFICATION IN THE INTEGRATOR COMPLEX</scope>
    <scope>SUBCELLULAR LOCATION</scope>
</reference>
<reference evidence="14" key="9">
    <citation type="journal article" date="2022" name="Nat. Commun.">
        <title>Inositol hexakisphosphate is required for Integrator function.</title>
        <authorList>
            <person name="Lin M.H."/>
            <person name="Jensen M.K."/>
            <person name="Elrod N.D."/>
            <person name="Huang K.L."/>
            <person name="Welle K.A."/>
            <person name="Wagner E.J."/>
            <person name="Tong L."/>
        </authorList>
    </citation>
    <scope>STRUCTURE BY ELECTRON MICROSCOPY (2.74 ANGSTROMS) IN COMPLEX WITH INOSITOL HEXAKISPHOSPHATE; INTS4 AND INTS9</scope>
</reference>
<protein>
    <recommendedName>
        <fullName evidence="9">Integrator complex subunit 4</fullName>
    </recommendedName>
</protein>
<sequence>MALAIKKRVGTYVETVDGSPPVKKLRLQTLAADAKGGKSGKVGNVERKLTALNQLDAYVGNLPAGALVLPTGTPVASTGAPSTGVIGNPPAAATGAPPMTAANSRELLELLVKITDEISYEDVEMGELKEVASKIFQLYQLQERDSDTSIRVKLLELLSGLGCECATEQALTMIIDYFIFLLRKEVSQKVLAQGMMCLFRIGERRKHMLPISYKTQVAHLAKEQLRSGSAHTQKNAMLVIGRFATKMEGERHYVWKLAFYIDSQDSSVRAQALHALLTLGERGSQLPAVLYKRAVEAMKDDYECVRKEALQLVFMLGNRHPDYILPSDRQQEELRMIDAAFSKVCEALCDLSLQIRVLAAELLGGMTAVSREFLHQTLDKKLMSNLRRKRTAHERGARLVASGEWSSGKRWADDAPQEHLDAQSISIIASGACGALIHGLEDEFLEVRTAAVASMCKLALSRPDFAVTSLDFLVDMFNDEIEDVRLKAIYSLTAIAKHIVLREDQLEIMLGSLEDYSVDVREGLHLMLGACRVSTQTCLLMVVQKLLDVLAKYPQDRNSTYACMRKIGQKHPHLVMAVAVHLLYVHPFFETPERDVEDPAYLCVLILVFNAAEHLVPIISLLPTATHRHYAYLRDSMPNLVPQLPIEGASSASATHRIDSAMHQAGSSAEYLQMILSHIEEIFTMTDERLELLQTAQSNLQRLGSIDAGMYGTSNFLETFLAAQIQIEQMQRCASTQRSRVPLKESLAALIRNCLKLQHTFSGLNYGDILQVKQLRLRACALHLVLVVRDRSQSALGPCQMLLQTAGDISEFIKANTKDEEEKPPVVETDMPMKESVSRDAQPDSFTRQLLIKLDGISDPKPGRVFREILPLVQQAPPLALPPANDKIRRCVANILEPCPLQSQDNVIKVTAGLIAAVPFVAEIDNLLESQKADMRIKIKYPDQHMHTVVPKQSDFKPIMTEQGEHKTNVRLRTTILLSHSVWTESSLVEIQLCLAVRPGSELELCKPAKVLFAPKPVRRGI</sequence>
<gene>
    <name evidence="10 12" type="primary">IntS4</name>
    <name evidence="12" type="synonym">l(1)G0095</name>
    <name evidence="12" type="ORF">CG12113</name>
</gene>
<evidence type="ECO:0000256" key="1">
    <source>
        <dbReference type="SAM" id="MobiDB-lite"/>
    </source>
</evidence>
<evidence type="ECO:0000269" key="2">
    <source>
    </source>
</evidence>
<evidence type="ECO:0000269" key="3">
    <source>
    </source>
</evidence>
<evidence type="ECO:0000269" key="4">
    <source>
    </source>
</evidence>
<evidence type="ECO:0000269" key="5">
    <source>
    </source>
</evidence>
<evidence type="ECO:0000269" key="6">
    <source>
    </source>
</evidence>
<evidence type="ECO:0000269" key="7">
    <source>
    </source>
</evidence>
<evidence type="ECO:0000269" key="8">
    <source>
    </source>
</evidence>
<evidence type="ECO:0000303" key="9">
    <source>
    </source>
</evidence>
<evidence type="ECO:0000303" key="10">
    <source>
    </source>
</evidence>
<evidence type="ECO:0000305" key="11"/>
<evidence type="ECO:0000312" key="12">
    <source>
        <dbReference type="FlyBase" id="FBgn0026679"/>
    </source>
</evidence>
<evidence type="ECO:0000312" key="13">
    <source>
        <dbReference type="Proteomes" id="UP000000803"/>
    </source>
</evidence>
<evidence type="ECO:0007744" key="14">
    <source>
        <dbReference type="PDB" id="7SN8"/>
    </source>
</evidence>
<evidence type="ECO:0007829" key="15">
    <source>
        <dbReference type="PDB" id="7SN8"/>
    </source>
</evidence>
<name>INT4_DROME</name>
<comment type="function">
    <text evidence="2 3 5">Component of the integrator complex, a multiprotein complex that terminates RNA polymerase II (Pol II) transcription in the promoter-proximal region of genes (PubMed:21078872, PubMed:23097424, PubMed:32966759). The integrator complex provides a quality checkpoint during transcription elongation by driving premature transcription termination of transcripts that are unfavorably configured for transcriptional elongation: the complex terminates transcription by (1) catalyzing dephosphorylation of the C-terminal domain (CTD) of Pol II subunit Polr2A/Rbp1 and Spt5, and (2) degrading the exiting nascent RNA transcript via endonuclease activity (PubMed:32966759). The integrator complex is also involved in the 3'-end processing of the U7 snRNA, and also the spliceosomal snRNAs U1, U2, U4 and U5 (PubMed:21078872, PubMed:23097424).</text>
</comment>
<comment type="subunit">
    <text evidence="3 4 5 6 7 8">Belongs to the multiprotein complex Integrator, at least composed of IntS1, IntS2, IntS3, IntS4, omd/IntS5, IntS6, defl/IntS7, IntS8, IntS9, IntS10, IntS11, IntS12, asun/IntS13, IntS14 and IntS15 (PubMed:23097424, PubMed:31530651, PubMed:32966759, PubMed:37995689, PubMed:39032490). The core complex associates with protein phosphatase 2A subunits mts/PP2A and Pp2A-29B, to form the Integrator-PP2A (INTAC) complex (PubMed:32966759, PubMed:37995689). IntS4 is part of the RNA endonuclease subcomplex, composed of IntS4, IntS9, IntS11 and inositol hexakisphosphate (InsP6) (PubMed:36180473).</text>
</comment>
<comment type="subcellular location">
    <subcellularLocation>
        <location evidence="8">Nucleus</location>
    </subcellularLocation>
</comment>
<comment type="similarity">
    <text evidence="11">Belongs to the Integrator subunit 4 family.</text>
</comment>
<keyword id="KW-0002">3D-structure</keyword>
<keyword id="KW-0539">Nucleus</keyword>
<keyword id="KW-1185">Reference proteome</keyword>
<feature type="chain" id="PRO_0000437657" description="Integrator complex subunit 4">
    <location>
        <begin position="1"/>
        <end position="1022"/>
    </location>
</feature>
<feature type="region of interest" description="Disordered" evidence="1">
    <location>
        <begin position="818"/>
        <end position="840"/>
    </location>
</feature>
<feature type="binding site" evidence="6 14">
    <location>
        <position position="148"/>
    </location>
    <ligand>
        <name>1D-myo-inositol hexakisphosphate</name>
        <dbReference type="ChEBI" id="CHEBI:58130"/>
    </ligand>
</feature>
<feature type="binding site" evidence="6">
    <location>
        <position position="184"/>
    </location>
    <ligand>
        <name>1D-myo-inositol hexakisphosphate</name>
        <dbReference type="ChEBI" id="CHEBI:58130"/>
    </ligand>
</feature>
<feature type="helix" evidence="15">
    <location>
        <begin position="104"/>
        <end position="117"/>
    </location>
</feature>
<feature type="helix" evidence="15">
    <location>
        <begin position="128"/>
        <end position="141"/>
    </location>
</feature>
<feature type="helix" evidence="15">
    <location>
        <begin position="148"/>
        <end position="163"/>
    </location>
</feature>
<feature type="strand" evidence="15">
    <location>
        <begin position="167"/>
        <end position="169"/>
    </location>
</feature>
<feature type="helix" evidence="15">
    <location>
        <begin position="170"/>
        <end position="183"/>
    </location>
</feature>
<feature type="helix" evidence="15">
    <location>
        <begin position="188"/>
        <end position="205"/>
    </location>
</feature>
<feature type="strand" evidence="15">
    <location>
        <begin position="206"/>
        <end position="209"/>
    </location>
</feature>
<feature type="helix" evidence="15">
    <location>
        <begin position="211"/>
        <end position="227"/>
    </location>
</feature>
<feature type="helix" evidence="15">
    <location>
        <begin position="232"/>
        <end position="243"/>
    </location>
</feature>
<feature type="turn" evidence="15">
    <location>
        <begin position="246"/>
        <end position="252"/>
    </location>
</feature>
<feature type="helix" evidence="15">
    <location>
        <begin position="253"/>
        <end position="258"/>
    </location>
</feature>
<feature type="helix" evidence="15">
    <location>
        <begin position="259"/>
        <end position="262"/>
    </location>
</feature>
<feature type="helix" evidence="15">
    <location>
        <begin position="266"/>
        <end position="281"/>
    </location>
</feature>
<feature type="helix" evidence="15">
    <location>
        <begin position="290"/>
        <end position="295"/>
    </location>
</feature>
<feature type="helix" evidence="15">
    <location>
        <begin position="296"/>
        <end position="299"/>
    </location>
</feature>
<feature type="helix" evidence="15">
    <location>
        <begin position="303"/>
        <end position="319"/>
    </location>
</feature>
<feature type="helix" evidence="15">
    <location>
        <begin position="338"/>
        <end position="345"/>
    </location>
</feature>
<feature type="helix" evidence="15">
    <location>
        <begin position="346"/>
        <end position="349"/>
    </location>
</feature>
<feature type="helix" evidence="15">
    <location>
        <begin position="353"/>
        <end position="363"/>
    </location>
</feature>
<feature type="helix" evidence="15">
    <location>
        <begin position="374"/>
        <end position="376"/>
    </location>
</feature>
<feature type="strand" evidence="15">
    <location>
        <begin position="377"/>
        <end position="379"/>
    </location>
</feature>
<feature type="helix" evidence="15">
    <location>
        <begin position="435"/>
        <end position="440"/>
    </location>
</feature>
<feature type="helix" evidence="15">
    <location>
        <begin position="446"/>
        <end position="461"/>
    </location>
</feature>
<feature type="helix" evidence="15">
    <location>
        <begin position="463"/>
        <end position="468"/>
    </location>
</feature>
<feature type="helix" evidence="15">
    <location>
        <begin position="470"/>
        <end position="475"/>
    </location>
</feature>
<feature type="helix" evidence="15">
    <location>
        <begin position="476"/>
        <end position="478"/>
    </location>
</feature>
<feature type="helix" evidence="15">
    <location>
        <begin position="482"/>
        <end position="495"/>
    </location>
</feature>
<feature type="helix" evidence="15">
    <location>
        <begin position="503"/>
        <end position="510"/>
    </location>
</feature>
<feature type="helix" evidence="15">
    <location>
        <begin position="520"/>
        <end position="530"/>
    </location>
</feature>
<feature type="helix" evidence="15">
    <location>
        <begin position="538"/>
        <end position="550"/>
    </location>
</feature>
<feature type="helix" evidence="15">
    <location>
        <begin position="559"/>
        <end position="568"/>
    </location>
</feature>